<protein>
    <recommendedName>
        <fullName evidence="3">Uridine phosphorylase A</fullName>
        <shortName evidence="3">SmUPa</shortName>
        <ecNumber evidence="2">2.4.2.3</ecNumber>
    </recommendedName>
</protein>
<organism evidence="6">
    <name type="scientific">Schistosoma mansoni</name>
    <name type="common">Blood fluke</name>
    <dbReference type="NCBI Taxonomy" id="6183"/>
    <lineage>
        <taxon>Eukaryota</taxon>
        <taxon>Metazoa</taxon>
        <taxon>Spiralia</taxon>
        <taxon>Lophotrochozoa</taxon>
        <taxon>Platyhelminthes</taxon>
        <taxon>Trematoda</taxon>
        <taxon>Digenea</taxon>
        <taxon>Strigeidida</taxon>
        <taxon>Schistosomatoidea</taxon>
        <taxon>Schistosomatidae</taxon>
        <taxon>Schistosoma</taxon>
    </lineage>
</organism>
<name>UPPA_SCHMA</name>
<keyword id="KW-0002">3D-structure</keyword>
<keyword id="KW-0328">Glycosyltransferase</keyword>
<keyword id="KW-1185">Reference proteome</keyword>
<keyword id="KW-0808">Transferase</keyword>
<dbReference type="EC" id="2.4.2.3" evidence="2"/>
<dbReference type="EMBL" id="HE601626">
    <property type="protein sequence ID" value="CCD78101.1"/>
    <property type="molecule type" value="Genomic_DNA"/>
</dbReference>
<dbReference type="RefSeq" id="XP_018650718.1">
    <property type="nucleotide sequence ID" value="XM_018798872.1"/>
</dbReference>
<dbReference type="PDB" id="4TXH">
    <property type="method" value="X-ray"/>
    <property type="resolution" value="1.89 A"/>
    <property type="chains" value="A/B/C/D=1-296"/>
</dbReference>
<dbReference type="PDB" id="4TXJ">
    <property type="method" value="X-ray"/>
    <property type="resolution" value="1.66 A"/>
    <property type="chains" value="A/B/C/D=1-296"/>
</dbReference>
<dbReference type="PDB" id="4TXL">
    <property type="method" value="X-ray"/>
    <property type="resolution" value="1.92 A"/>
    <property type="chains" value="A/B/C/D=1-296"/>
</dbReference>
<dbReference type="PDB" id="4TXM">
    <property type="method" value="X-ray"/>
    <property type="resolution" value="1.93 A"/>
    <property type="chains" value="A/B=1-296"/>
</dbReference>
<dbReference type="PDB" id="4TXN">
    <property type="method" value="X-ray"/>
    <property type="resolution" value="2.00 A"/>
    <property type="chains" value="A/B/C/D=1-296"/>
</dbReference>
<dbReference type="PDBsum" id="4TXH"/>
<dbReference type="PDBsum" id="4TXJ"/>
<dbReference type="PDBsum" id="4TXL"/>
<dbReference type="PDBsum" id="4TXM"/>
<dbReference type="PDBsum" id="4TXN"/>
<dbReference type="SMR" id="G4VGI0"/>
<dbReference type="FunCoup" id="G4VGI0">
    <property type="interactions" value="171"/>
</dbReference>
<dbReference type="STRING" id="6183.G4VGI0"/>
<dbReference type="EnsemblMetazoa" id="Smp_308140.1">
    <property type="protein sequence ID" value="Smp_308140.1"/>
    <property type="gene ID" value="Smp_308140"/>
</dbReference>
<dbReference type="GeneID" id="8343370"/>
<dbReference type="KEGG" id="smm:Smp_082430"/>
<dbReference type="WBParaSite" id="Smp_308140.1">
    <property type="protein sequence ID" value="Smp_308140.1"/>
    <property type="gene ID" value="Smp_308140"/>
</dbReference>
<dbReference type="CTD" id="8343370"/>
<dbReference type="eggNOG" id="KOG3728">
    <property type="taxonomic scope" value="Eukaryota"/>
</dbReference>
<dbReference type="HOGENOM" id="CLU_054104_0_0_1"/>
<dbReference type="InParanoid" id="G4VGI0"/>
<dbReference type="OMA" id="NIEMEAN"/>
<dbReference type="OrthoDB" id="204058at2759"/>
<dbReference type="PhylomeDB" id="G4VGI0"/>
<dbReference type="UniPathway" id="UPA00574">
    <property type="reaction ID" value="UER00633"/>
</dbReference>
<dbReference type="EvolutionaryTrace" id="G4VGI0"/>
<dbReference type="Proteomes" id="UP000008854">
    <property type="component" value="Unassembled WGS sequence"/>
</dbReference>
<dbReference type="ExpressionAtlas" id="G4VGI0">
    <property type="expression patterns" value="baseline"/>
</dbReference>
<dbReference type="GO" id="GO:0005829">
    <property type="term" value="C:cytosol"/>
    <property type="evidence" value="ECO:0007669"/>
    <property type="project" value="TreeGrafter"/>
</dbReference>
<dbReference type="GO" id="GO:0042802">
    <property type="term" value="F:identical protein binding"/>
    <property type="evidence" value="ECO:0000353"/>
    <property type="project" value="UniProtKB"/>
</dbReference>
<dbReference type="GO" id="GO:0004850">
    <property type="term" value="F:uridine phosphorylase activity"/>
    <property type="evidence" value="ECO:0000314"/>
    <property type="project" value="UniProtKB"/>
</dbReference>
<dbReference type="GO" id="GO:0009166">
    <property type="term" value="P:nucleotide catabolic process"/>
    <property type="evidence" value="ECO:0007669"/>
    <property type="project" value="InterPro"/>
</dbReference>
<dbReference type="GO" id="GO:0044206">
    <property type="term" value="P:UMP salvage"/>
    <property type="evidence" value="ECO:0007669"/>
    <property type="project" value="UniProtKB-UniPathway"/>
</dbReference>
<dbReference type="GO" id="GO:0006218">
    <property type="term" value="P:uridine catabolic process"/>
    <property type="evidence" value="ECO:0000314"/>
    <property type="project" value="UniProtKB"/>
</dbReference>
<dbReference type="CDD" id="cd17763">
    <property type="entry name" value="UP_hUPP-like"/>
    <property type="match status" value="1"/>
</dbReference>
<dbReference type="Gene3D" id="3.40.50.1580">
    <property type="entry name" value="Nucleoside phosphorylase domain"/>
    <property type="match status" value="1"/>
</dbReference>
<dbReference type="InterPro" id="IPR000845">
    <property type="entry name" value="Nucleoside_phosphorylase_d"/>
</dbReference>
<dbReference type="InterPro" id="IPR035994">
    <property type="entry name" value="Nucleoside_phosphorylase_sf"/>
</dbReference>
<dbReference type="InterPro" id="IPR010059">
    <property type="entry name" value="Uridine_phosphorylase_euk"/>
</dbReference>
<dbReference type="NCBIfam" id="TIGR01719">
    <property type="entry name" value="euk_UDPppase"/>
    <property type="match status" value="1"/>
</dbReference>
<dbReference type="PANTHER" id="PTHR43691:SF11">
    <property type="entry name" value="FI09636P-RELATED"/>
    <property type="match status" value="1"/>
</dbReference>
<dbReference type="PANTHER" id="PTHR43691">
    <property type="entry name" value="URIDINE PHOSPHORYLASE"/>
    <property type="match status" value="1"/>
</dbReference>
<dbReference type="Pfam" id="PF01048">
    <property type="entry name" value="PNP_UDP_1"/>
    <property type="match status" value="1"/>
</dbReference>
<dbReference type="SUPFAM" id="SSF53167">
    <property type="entry name" value="Purine and uridine phosphorylases"/>
    <property type="match status" value="1"/>
</dbReference>
<proteinExistence type="evidence at protein level"/>
<feature type="chain" id="PRO_0000449952" description="Uridine phosphorylase A">
    <location>
        <begin position="1"/>
        <end position="296"/>
    </location>
</feature>
<feature type="binding site" evidence="1">
    <location>
        <position position="46"/>
    </location>
    <ligand>
        <name>phosphate</name>
        <dbReference type="ChEBI" id="CHEBI:43474"/>
    </ligand>
</feature>
<feature type="binding site" evidence="1">
    <location>
        <position position="77"/>
    </location>
    <ligand>
        <name>phosphate</name>
        <dbReference type="ChEBI" id="CHEBI:43474"/>
    </ligand>
</feature>
<feature type="binding site" evidence="1">
    <location>
        <begin position="121"/>
        <end position="124"/>
    </location>
    <ligand>
        <name>phosphate</name>
        <dbReference type="ChEBI" id="CHEBI:43474"/>
    </ligand>
</feature>
<feature type="binding site" evidence="2 9 10 11 12">
    <location>
        <begin position="125"/>
        <end position="126"/>
    </location>
    <ligand>
        <name>uridine</name>
        <dbReference type="ChEBI" id="CHEBI:16704"/>
    </ligand>
</feature>
<feature type="binding site" evidence="2 9 10 12">
    <location>
        <begin position="201"/>
        <end position="203"/>
    </location>
    <ligand>
        <name>uridine</name>
        <dbReference type="ChEBI" id="CHEBI:16704"/>
    </ligand>
</feature>
<feature type="helix" evidence="13">
    <location>
        <begin position="12"/>
        <end position="14"/>
    </location>
</feature>
<feature type="turn" evidence="13">
    <location>
        <begin position="21"/>
        <end position="23"/>
    </location>
</feature>
<feature type="turn" evidence="13">
    <location>
        <begin position="27"/>
        <end position="29"/>
    </location>
</feature>
<feature type="helix" evidence="13">
    <location>
        <begin position="32"/>
        <end position="36"/>
    </location>
</feature>
<feature type="strand" evidence="13">
    <location>
        <begin position="41"/>
        <end position="46"/>
    </location>
</feature>
<feature type="helix" evidence="13">
    <location>
        <begin position="48"/>
        <end position="61"/>
    </location>
</feature>
<feature type="strand" evidence="13">
    <location>
        <begin position="80"/>
        <end position="83"/>
    </location>
</feature>
<feature type="strand" evidence="13">
    <location>
        <begin position="86"/>
        <end position="90"/>
    </location>
</feature>
<feature type="helix" evidence="13">
    <location>
        <begin position="95"/>
        <end position="112"/>
    </location>
</feature>
<feature type="strand" evidence="13">
    <location>
        <begin position="118"/>
        <end position="130"/>
    </location>
</feature>
<feature type="strand" evidence="13">
    <location>
        <begin position="135"/>
        <end position="142"/>
    </location>
</feature>
<feature type="strand" evidence="13">
    <location>
        <begin position="148"/>
        <end position="154"/>
    </location>
</feature>
<feature type="strand" evidence="13">
    <location>
        <begin position="157"/>
        <end position="162"/>
    </location>
</feature>
<feature type="helix" evidence="13">
    <location>
        <begin position="167"/>
        <end position="179"/>
    </location>
</feature>
<feature type="strand" evidence="13">
    <location>
        <begin position="186"/>
        <end position="193"/>
    </location>
</feature>
<feature type="strand" evidence="13">
    <location>
        <begin position="195"/>
        <end position="198"/>
    </location>
</feature>
<feature type="helix" evidence="13">
    <location>
        <begin position="199"/>
        <end position="201"/>
    </location>
</feature>
<feature type="strand" evidence="14">
    <location>
        <begin position="204"/>
        <end position="207"/>
    </location>
</feature>
<feature type="helix" evidence="13">
    <location>
        <begin position="213"/>
        <end position="225"/>
    </location>
</feature>
<feature type="strand" evidence="13">
    <location>
        <begin position="228"/>
        <end position="234"/>
    </location>
</feature>
<feature type="helix" evidence="13">
    <location>
        <begin position="235"/>
        <end position="244"/>
    </location>
</feature>
<feature type="strand" evidence="13">
    <location>
        <begin position="248"/>
        <end position="258"/>
    </location>
</feature>
<feature type="turn" evidence="13">
    <location>
        <begin position="259"/>
        <end position="261"/>
    </location>
</feature>
<feature type="helix" evidence="13">
    <location>
        <begin position="269"/>
        <end position="276"/>
    </location>
</feature>
<feature type="helix" evidence="13">
    <location>
        <begin position="278"/>
        <end position="289"/>
    </location>
</feature>
<accession>G4VGI0</accession>
<evidence type="ECO:0000250" key="1">
    <source>
        <dbReference type="UniProtKB" id="Q16831"/>
    </source>
</evidence>
<evidence type="ECO:0000269" key="2">
    <source>
    </source>
</evidence>
<evidence type="ECO:0000303" key="3">
    <source>
    </source>
</evidence>
<evidence type="ECO:0000305" key="4"/>
<evidence type="ECO:0000305" key="5">
    <source>
    </source>
</evidence>
<evidence type="ECO:0000312" key="6">
    <source>
        <dbReference type="EMBL" id="CCD78101.1"/>
    </source>
</evidence>
<evidence type="ECO:0000312" key="7">
    <source>
        <dbReference type="Proteomes" id="UP000008854"/>
    </source>
</evidence>
<evidence type="ECO:0007744" key="8">
    <source>
        <dbReference type="PDB" id="4TXH"/>
    </source>
</evidence>
<evidence type="ECO:0007744" key="9">
    <source>
        <dbReference type="PDB" id="4TXJ"/>
    </source>
</evidence>
<evidence type="ECO:0007744" key="10">
    <source>
        <dbReference type="PDB" id="4TXL"/>
    </source>
</evidence>
<evidence type="ECO:0007744" key="11">
    <source>
        <dbReference type="PDB" id="4TXM"/>
    </source>
</evidence>
<evidence type="ECO:0007744" key="12">
    <source>
        <dbReference type="PDB" id="4TXN"/>
    </source>
</evidence>
<evidence type="ECO:0007829" key="13">
    <source>
        <dbReference type="PDB" id="4TXJ"/>
    </source>
</evidence>
<evidence type="ECO:0007829" key="14">
    <source>
        <dbReference type="PDB" id="4TXM"/>
    </source>
</evidence>
<comment type="function">
    <text evidence="2 4">Catalyzes the reversible phosphorylytic cleavage of uridine and deoxyuridine to uracil and ribose- or deoxyribose-1-phosphate (PubMed:26898674). The produced molecules are then utilized as carbon and energy sources or in the rescue of pyrimidine bases for nucleotide synthesis (Probable).</text>
</comment>
<comment type="catalytic activity">
    <reaction evidence="2">
        <text>uridine + phosphate = alpha-D-ribose 1-phosphate + uracil</text>
        <dbReference type="Rhea" id="RHEA:24388"/>
        <dbReference type="ChEBI" id="CHEBI:16704"/>
        <dbReference type="ChEBI" id="CHEBI:17568"/>
        <dbReference type="ChEBI" id="CHEBI:43474"/>
        <dbReference type="ChEBI" id="CHEBI:57720"/>
        <dbReference type="EC" id="2.4.2.3"/>
    </reaction>
</comment>
<comment type="biophysicochemical properties">
    <kinetics>
        <KM evidence="2">31 uM for uridine</KM>
        <KM evidence="2">48.9 uM for thymidine</KM>
        <text evidence="2">kcat is 35.9 sec(-1) for uridine. kcat is 0.41 sec(-1) for thymidine.</text>
    </kinetics>
</comment>
<comment type="pathway">
    <text evidence="2">Pyrimidine metabolism; UMP biosynthesis via salvage pathway; uracil from uridine (phosphorylase route): step 1/1.</text>
</comment>
<comment type="subunit">
    <text evidence="2">Homodimer.</text>
</comment>
<comment type="similarity">
    <text evidence="4">Belongs to the PNP/UDP phosphorylase family.</text>
</comment>
<reference evidence="7" key="1">
    <citation type="journal article" date="2012" name="PLoS Negl. Trop. Dis.">
        <title>A systematically improved high quality genome and transcriptome of the human blood fluke Schistosoma mansoni.</title>
        <authorList>
            <person name="Protasio A.V."/>
            <person name="Tsai I.J."/>
            <person name="Babbage A."/>
            <person name="Nichol S."/>
            <person name="Hunt M."/>
            <person name="Aslett M.A."/>
            <person name="De Silva N."/>
            <person name="Velarde G.S."/>
            <person name="Anderson T.J."/>
            <person name="Clark R.C."/>
            <person name="Davidson C."/>
            <person name="Dillon G.P."/>
            <person name="Holroyd N.E."/>
            <person name="LoVerde P.T."/>
            <person name="Lloyd C."/>
            <person name="McQuillan J."/>
            <person name="Oliveira G."/>
            <person name="Otto T.D."/>
            <person name="Parker-Manuel S.J."/>
            <person name="Quail M.A."/>
            <person name="Wilson R.A."/>
            <person name="Zerlotini A."/>
            <person name="Dunne D.W."/>
            <person name="Berriman M."/>
        </authorList>
    </citation>
    <scope>NUCLEOTIDE SEQUENCE [LARGE SCALE GENOMIC DNA]</scope>
    <source>
        <strain evidence="7">Puerto Rican</strain>
    </source>
</reference>
<reference evidence="8 9 10" key="2">
    <citation type="journal article" date="2016" name="Biochimie">
        <title>Analysis of two Schistosoma mansoni uridine phosphorylases isoforms suggests the emergence of a protein with a non-canonical function.</title>
        <authorList>
            <person name="da Silva Neto A.M."/>
            <person name="Torini de Souza J.R."/>
            <person name="Romanelo L."/>
            <person name="Cassago A."/>
            <person name="Serrao V.H."/>
            <person name="DeMarco R."/>
            <person name="Brandao-Neto J."/>
            <person name="Garratt R.C."/>
            <person name="Pereira H.D."/>
        </authorList>
    </citation>
    <scope>X-RAY CRYSTALLOGRAPHY (1.66 ANGSTROMS) IN APO FORM AND IN COMPLEX WITH URIDINE; THYMINE AND 5-FLUOROURACIL</scope>
    <scope>FUNCTION</scope>
    <scope>CATALYTIC ACTIVITY</scope>
    <scope>BIOPHYSICOCHEMICAL PROPERTIES</scope>
    <scope>PATHWAY</scope>
    <scope>SUBUNIT</scope>
</reference>
<sequence>MATVQPIVNSHLSELDEDVFHHFGFTTKSFDFKEKFGDVKFVCVCGSSGRIHNFAISMAKLAGLALPVENIAGSHARFVLYKVDHILFADHGMGIPSALIMLHEVTKLLHYAGCKDVLFIRLGTSGGLGVKPGTIVLSDRCVNTKLEPYNELCILGKPVRRQTIVDLNTVNELKKLSENLSLECSVVVGGTIAANDFYEEQGRLDGSICTFSKEEKLAFLQSAYEHGIRNMEMEGTAITSHCYLTGHRAILVCVTAVNRLEGDQITISTDEFTLFAQRPGQLVGEYLKRNNGIIVR</sequence>
<gene>
    <name evidence="5" type="primary">UPPA</name>
    <name evidence="6" type="ORF">Smp_082430</name>
</gene>